<dbReference type="EMBL" id="CR858360">
    <property type="protein sequence ID" value="CAH90591.1"/>
    <property type="molecule type" value="mRNA"/>
</dbReference>
<dbReference type="RefSeq" id="NP_001125319.1">
    <property type="nucleotide sequence ID" value="NM_001131847.1"/>
</dbReference>
<dbReference type="RefSeq" id="XP_009232979.1">
    <property type="nucleotide sequence ID" value="XM_009234704.1"/>
</dbReference>
<dbReference type="RefSeq" id="XP_009232980.1">
    <property type="nucleotide sequence ID" value="XM_009234705.1"/>
</dbReference>
<dbReference type="RefSeq" id="XP_009232981.1">
    <property type="nucleotide sequence ID" value="XM_009234706.1"/>
</dbReference>
<dbReference type="RefSeq" id="XP_009232982.1">
    <property type="nucleotide sequence ID" value="XM_009234707.1"/>
</dbReference>
<dbReference type="RefSeq" id="XP_009232983.1">
    <property type="nucleotide sequence ID" value="XM_009234708.1"/>
</dbReference>
<dbReference type="RefSeq" id="XP_063577052.1">
    <property type="nucleotide sequence ID" value="XM_063720982.1"/>
</dbReference>
<dbReference type="SMR" id="Q5RCB6"/>
<dbReference type="FunCoup" id="Q5RCB6">
    <property type="interactions" value="346"/>
</dbReference>
<dbReference type="STRING" id="9601.ENSPPYP00000022644"/>
<dbReference type="Ensembl" id="ENSPPYT00000023604.2">
    <property type="protein sequence ID" value="ENSPPYP00000022644.1"/>
    <property type="gene ID" value="ENSPPYG00000020235.2"/>
</dbReference>
<dbReference type="GeneID" id="100172218"/>
<dbReference type="KEGG" id="pon:100172218"/>
<dbReference type="CTD" id="5638"/>
<dbReference type="eggNOG" id="ENOG502RU75">
    <property type="taxonomic scope" value="Eukaryota"/>
</dbReference>
<dbReference type="GeneTree" id="ENSGT00950000182841"/>
<dbReference type="HOGENOM" id="CLU_103591_0_0_1"/>
<dbReference type="InParanoid" id="Q5RCB6"/>
<dbReference type="OrthoDB" id="9558098at2759"/>
<dbReference type="TreeFam" id="TF332123"/>
<dbReference type="Proteomes" id="UP000001595">
    <property type="component" value="Chromosome X"/>
</dbReference>
<dbReference type="GO" id="GO:0005615">
    <property type="term" value="C:extracellular space"/>
    <property type="evidence" value="ECO:0007669"/>
    <property type="project" value="TreeGrafter"/>
</dbReference>
<dbReference type="GO" id="GO:0016020">
    <property type="term" value="C:membrane"/>
    <property type="evidence" value="ECO:0007669"/>
    <property type="project" value="UniProtKB-SubCell"/>
</dbReference>
<dbReference type="GO" id="GO:0005509">
    <property type="term" value="F:calcium ion binding"/>
    <property type="evidence" value="ECO:0007669"/>
    <property type="project" value="InterPro"/>
</dbReference>
<dbReference type="FunFam" id="4.10.740.10:FF:000001">
    <property type="entry name" value="vitamin K-dependent protein S"/>
    <property type="match status" value="1"/>
</dbReference>
<dbReference type="Gene3D" id="4.10.740.10">
    <property type="entry name" value="Coagulation Factor IX"/>
    <property type="match status" value="1"/>
</dbReference>
<dbReference type="InterPro" id="IPR017857">
    <property type="entry name" value="Coagulation_fac-like_Gla_dom"/>
</dbReference>
<dbReference type="InterPro" id="IPR035972">
    <property type="entry name" value="GLA-like_dom_SF"/>
</dbReference>
<dbReference type="InterPro" id="IPR000294">
    <property type="entry name" value="GLA_domain"/>
</dbReference>
<dbReference type="InterPro" id="IPR050442">
    <property type="entry name" value="Peptidase_S1_coag_factors"/>
</dbReference>
<dbReference type="PANTHER" id="PTHR24278">
    <property type="entry name" value="COAGULATION FACTOR"/>
    <property type="match status" value="1"/>
</dbReference>
<dbReference type="PANTHER" id="PTHR24278:SF37">
    <property type="entry name" value="TRANSMEMBRANE GAMMA-CARBOXYGLUTAMIC ACID PROTEIN 1"/>
    <property type="match status" value="1"/>
</dbReference>
<dbReference type="Pfam" id="PF00594">
    <property type="entry name" value="Gla"/>
    <property type="match status" value="1"/>
</dbReference>
<dbReference type="PRINTS" id="PR00001">
    <property type="entry name" value="GLABLOOD"/>
</dbReference>
<dbReference type="SMART" id="SM00069">
    <property type="entry name" value="GLA"/>
    <property type="match status" value="1"/>
</dbReference>
<dbReference type="SUPFAM" id="SSF57630">
    <property type="entry name" value="GLA-domain"/>
    <property type="match status" value="1"/>
</dbReference>
<dbReference type="PROSITE" id="PS00011">
    <property type="entry name" value="GLA_1"/>
    <property type="match status" value="1"/>
</dbReference>
<dbReference type="PROSITE" id="PS50998">
    <property type="entry name" value="GLA_2"/>
    <property type="match status" value="1"/>
</dbReference>
<feature type="propeptide" id="PRO_0000352669" evidence="2">
    <location>
        <begin position="1"/>
        <end position="20"/>
    </location>
</feature>
<feature type="chain" id="PRO_0000352670" description="Transmembrane gamma-carboxyglutamic acid protein 1">
    <location>
        <begin position="21"/>
        <end position="218"/>
    </location>
</feature>
<feature type="topological domain" description="Extracellular" evidence="2">
    <location>
        <begin position="21"/>
        <end position="80"/>
    </location>
</feature>
<feature type="transmembrane region" description="Helical" evidence="2">
    <location>
        <begin position="81"/>
        <end position="101"/>
    </location>
</feature>
<feature type="topological domain" description="Cytoplasmic" evidence="2">
    <location>
        <begin position="102"/>
        <end position="218"/>
    </location>
</feature>
<feature type="domain" description="Gla" evidence="3">
    <location>
        <begin position="20"/>
        <end position="66"/>
    </location>
</feature>
<feature type="region of interest" description="Disordered" evidence="4">
    <location>
        <begin position="161"/>
        <end position="195"/>
    </location>
</feature>
<feature type="disulfide bond" evidence="3">
    <location>
        <begin position="37"/>
        <end position="42"/>
    </location>
</feature>
<accession>Q5RCB6</accession>
<gene>
    <name type="primary">PRRG1</name>
    <name type="synonym">TMG1</name>
</gene>
<evidence type="ECO:0000250" key="1"/>
<evidence type="ECO:0000255" key="2"/>
<evidence type="ECO:0000255" key="3">
    <source>
        <dbReference type="PROSITE-ProRule" id="PRU00463"/>
    </source>
</evidence>
<evidence type="ECO:0000256" key="4">
    <source>
        <dbReference type="SAM" id="MobiDB-lite"/>
    </source>
</evidence>
<evidence type="ECO:0000305" key="5"/>
<reference key="1">
    <citation type="submission" date="2004-11" db="EMBL/GenBank/DDBJ databases">
        <authorList>
            <consortium name="The German cDNA consortium"/>
        </authorList>
    </citation>
    <scope>NUCLEOTIDE SEQUENCE [LARGE SCALE MRNA]</scope>
    <source>
        <tissue>Kidney</tissue>
    </source>
</reference>
<name>TMG1_PONAB</name>
<proteinExistence type="evidence at transcript level"/>
<keyword id="KW-1015">Disulfide bond</keyword>
<keyword id="KW-0472">Membrane</keyword>
<keyword id="KW-1185">Reference proteome</keyword>
<keyword id="KW-0812">Transmembrane</keyword>
<keyword id="KW-1133">Transmembrane helix</keyword>
<protein>
    <recommendedName>
        <fullName>Transmembrane gamma-carboxyglutamic acid protein 1</fullName>
    </recommendedName>
    <alternativeName>
        <fullName>Proline-rich gamma-carboxyglutamic acid protein 1</fullName>
        <shortName>Proline-rich Gla protein 1</shortName>
    </alternativeName>
</protein>
<sequence length="218" mass="24933">MGRVFLTGEKANSVLKRYPRANGFFEEIRQGNIERECKEEFCTFEEAREAFENNEKTKEFWSTYTKAQQGESNRGSDWFQFYLTFPLIFGLFIILLVIFLIWRCFLRNKTRRQTVTEGHIPFPQHLNIITPPPPPDEVFDSSGLSPGFLGYVVGRSDSVSTRLSNCDPPPTYEEATGQVNLQRSETEPHLDPPPEYEDIVNSNSASAIPMVPVVTTIK</sequence>
<comment type="subcellular location">
    <subcellularLocation>
        <location evidence="5">Membrane</location>
        <topology evidence="5">Single-pass type I membrane protein</topology>
    </subcellularLocation>
</comment>
<comment type="PTM">
    <text evidence="1">Gla residues are produced after subsequent post-translational modifications of glutamate by a vitamin K-dependent gamma-carboxylase.</text>
</comment>
<organism>
    <name type="scientific">Pongo abelii</name>
    <name type="common">Sumatran orangutan</name>
    <name type="synonym">Pongo pygmaeus abelii</name>
    <dbReference type="NCBI Taxonomy" id="9601"/>
    <lineage>
        <taxon>Eukaryota</taxon>
        <taxon>Metazoa</taxon>
        <taxon>Chordata</taxon>
        <taxon>Craniata</taxon>
        <taxon>Vertebrata</taxon>
        <taxon>Euteleostomi</taxon>
        <taxon>Mammalia</taxon>
        <taxon>Eutheria</taxon>
        <taxon>Euarchontoglires</taxon>
        <taxon>Primates</taxon>
        <taxon>Haplorrhini</taxon>
        <taxon>Catarrhini</taxon>
        <taxon>Hominidae</taxon>
        <taxon>Pongo</taxon>
    </lineage>
</organism>